<keyword id="KW-0119">Carbohydrate metabolism</keyword>
<keyword id="KW-1015">Disulfide bond</keyword>
<keyword id="KW-0325">Glycoprotein</keyword>
<keyword id="KW-0326">Glycosidase</keyword>
<keyword id="KW-0378">Hydrolase</keyword>
<keyword id="KW-0624">Polysaccharide degradation</keyword>
<keyword id="KW-1185">Reference proteome</keyword>
<keyword id="KW-0964">Secreted</keyword>
<keyword id="KW-0732">Signal</keyword>
<reference key="1">
    <citation type="journal article" date="2005" name="Nature">
        <title>Genome sequencing and analysis of Aspergillus oryzae.</title>
        <authorList>
            <person name="Machida M."/>
            <person name="Asai K."/>
            <person name="Sano M."/>
            <person name="Tanaka T."/>
            <person name="Kumagai T."/>
            <person name="Terai G."/>
            <person name="Kusumoto K."/>
            <person name="Arima T."/>
            <person name="Akita O."/>
            <person name="Kashiwagi Y."/>
            <person name="Abe K."/>
            <person name="Gomi K."/>
            <person name="Horiuchi H."/>
            <person name="Kitamoto K."/>
            <person name="Kobayashi T."/>
            <person name="Takeuchi M."/>
            <person name="Denning D.W."/>
            <person name="Galagan J.E."/>
            <person name="Nierman W.C."/>
            <person name="Yu J."/>
            <person name="Archer D.B."/>
            <person name="Bennett J.W."/>
            <person name="Bhatnagar D."/>
            <person name="Cleveland T.E."/>
            <person name="Fedorova N.D."/>
            <person name="Gotoh O."/>
            <person name="Horikawa H."/>
            <person name="Hosoyama A."/>
            <person name="Ichinomiya M."/>
            <person name="Igarashi R."/>
            <person name="Iwashita K."/>
            <person name="Juvvadi P.R."/>
            <person name="Kato M."/>
            <person name="Kato Y."/>
            <person name="Kin T."/>
            <person name="Kokubun A."/>
            <person name="Maeda H."/>
            <person name="Maeyama N."/>
            <person name="Maruyama J."/>
            <person name="Nagasaki H."/>
            <person name="Nakajima T."/>
            <person name="Oda K."/>
            <person name="Okada K."/>
            <person name="Paulsen I."/>
            <person name="Sakamoto K."/>
            <person name="Sawano T."/>
            <person name="Takahashi M."/>
            <person name="Takase K."/>
            <person name="Terabayashi Y."/>
            <person name="Wortman J.R."/>
            <person name="Yamada O."/>
            <person name="Yamagata Y."/>
            <person name="Anazawa H."/>
            <person name="Hata Y."/>
            <person name="Koide Y."/>
            <person name="Komori T."/>
            <person name="Koyama Y."/>
            <person name="Minetoki T."/>
            <person name="Suharnan S."/>
            <person name="Tanaka A."/>
            <person name="Isono K."/>
            <person name="Kuhara S."/>
            <person name="Ogasawara N."/>
            <person name="Kikuchi H."/>
        </authorList>
    </citation>
    <scope>NUCLEOTIDE SEQUENCE [LARGE SCALE GENOMIC DNA]</scope>
    <source>
        <strain>ATCC 42149 / RIB 40</strain>
    </source>
</reference>
<feature type="signal peptide" evidence="2">
    <location>
        <begin position="1"/>
        <end position="16"/>
    </location>
</feature>
<feature type="chain" id="PRO_0000395073" description="Probable alpha-galactosidase D">
    <location>
        <begin position="17"/>
        <end position="657"/>
    </location>
</feature>
<feature type="active site" description="Nucleophile" evidence="1">
    <location>
        <position position="155"/>
    </location>
</feature>
<feature type="active site" description="Proton donor" evidence="1">
    <location>
        <position position="222"/>
    </location>
</feature>
<feature type="binding site" evidence="1">
    <location>
        <begin position="200"/>
        <end position="204"/>
    </location>
    <ligand>
        <name>substrate</name>
    </ligand>
</feature>
<feature type="glycosylation site" description="N-linked (GlcNAc...) asparagine" evidence="2">
    <location>
        <position position="47"/>
    </location>
</feature>
<feature type="glycosylation site" description="N-linked (GlcNAc...) asparagine" evidence="2">
    <location>
        <position position="91"/>
    </location>
</feature>
<feature type="glycosylation site" description="N-linked (GlcNAc...) asparagine" evidence="2">
    <location>
        <position position="182"/>
    </location>
</feature>
<feature type="glycosylation site" description="N-linked (GlcNAc...) asparagine" evidence="2">
    <location>
        <position position="191"/>
    </location>
</feature>
<feature type="glycosylation site" description="N-linked (GlcNAc...) asparagine" evidence="2">
    <location>
        <position position="291"/>
    </location>
</feature>
<feature type="glycosylation site" description="N-linked (GlcNAc...) asparagine" evidence="2">
    <location>
        <position position="438"/>
    </location>
</feature>
<feature type="glycosylation site" description="N-linked (GlcNAc...) asparagine" evidence="2">
    <location>
        <position position="460"/>
    </location>
</feature>
<feature type="glycosylation site" description="N-linked (GlcNAc...) asparagine" evidence="2">
    <location>
        <position position="505"/>
    </location>
</feature>
<feature type="glycosylation site" description="N-linked (GlcNAc...) asparagine" evidence="2">
    <location>
        <position position="539"/>
    </location>
</feature>
<feature type="glycosylation site" description="N-linked (GlcNAc...) asparagine" evidence="2">
    <location>
        <position position="543"/>
    </location>
</feature>
<feature type="glycosylation site" description="N-linked (GlcNAc...) asparagine" evidence="2">
    <location>
        <position position="582"/>
    </location>
</feature>
<feature type="disulfide bond" evidence="1">
    <location>
        <begin position="124"/>
        <end position="157"/>
    </location>
</feature>
<sequence>MLPKIFYLSLLPAALGHPHLQPRLDNGLARTPQMGWNTYNHYSCSPNETIVRSNAQALVDLGLASLGYRYVTTDCGWTVADRLSDGSLTWNETLFPKGFPALGKYLHDLDLLFGVYQDSGIKLCGSPPDNVGSLYHEDQDARTFASWEVDSLKYDNCYSDAATGYPNVNYEPSTSPQPRFANMSRALAAQNRSMVFQVCEWGIDFPARWAPALGHSWRIGNDIIPHWRAIYRTLNQAVPQTSFAGPGQWPDLDMLFVGNDILSIPEEQTHFSLWAILKSPLTIGAALKDDNTSINDESLQILKQEEVIGYNQDSLGVSASLRRRWTEEGYEVWSGPLSGGRTVAALINWKDEARELTLDLPDIGLQFAGTVKNIWDGTTAQNVKTSYTAKVQSHGTILLELQDTTASGQYPTDTFATSTDSSTTFESIYGVTTSFRYNITVKLSEASSSGDVNIQSTASNKTITAQVSASGTEASAQIPLLAGSSNSITIVSPQSVDAITITPPNGTYFPNTAFTTTGDADTVSCGAGYCQPVGSKIGNISTNGTARAVIPATAGTKYLAIDYINNDVAFDSAWDWGSNSRNLTVSVNGNKPVRIEVPLSGQHSELFGPGKGWWDTATIGVLTEGWKDGDNDVVIGNEGGESGFTSYGPDFVGLRVL</sequence>
<gene>
    <name type="primary">aglD</name>
    <name type="ORF">AO090023000151</name>
</gene>
<proteinExistence type="inferred from homology"/>
<comment type="function">
    <text evidence="1">Hydrolyzes a variety of simple alpha-D-galactoside as well as more complex molecules such as oligosaccharides and polysaccharides.</text>
</comment>
<comment type="catalytic activity">
    <reaction>
        <text>Hydrolysis of terminal, non-reducing alpha-D-galactose residues in alpha-D-galactosides, including galactose oligosaccharides, galactomannans and galactolipids.</text>
        <dbReference type="EC" id="3.2.1.22"/>
    </reaction>
</comment>
<comment type="subcellular location">
    <subcellularLocation>
        <location evidence="1">Secreted</location>
    </subcellularLocation>
</comment>
<comment type="similarity">
    <text evidence="3">Belongs to the glycosyl hydrolase 27 family.</text>
</comment>
<comment type="sequence caution" evidence="3">
    <conflict type="erroneous gene model prediction">
        <sequence resource="EMBL-CDS" id="BAE58728"/>
    </conflict>
</comment>
<accession>Q2UI87</accession>
<protein>
    <recommendedName>
        <fullName>Probable alpha-galactosidase D</fullName>
        <ecNumber>3.2.1.22</ecNumber>
    </recommendedName>
    <alternativeName>
        <fullName>Melibiase D</fullName>
    </alternativeName>
</protein>
<organism>
    <name type="scientific">Aspergillus oryzae (strain ATCC 42149 / RIB 40)</name>
    <name type="common">Yellow koji mold</name>
    <dbReference type="NCBI Taxonomy" id="510516"/>
    <lineage>
        <taxon>Eukaryota</taxon>
        <taxon>Fungi</taxon>
        <taxon>Dikarya</taxon>
        <taxon>Ascomycota</taxon>
        <taxon>Pezizomycotina</taxon>
        <taxon>Eurotiomycetes</taxon>
        <taxon>Eurotiomycetidae</taxon>
        <taxon>Eurotiales</taxon>
        <taxon>Aspergillaceae</taxon>
        <taxon>Aspergillus</taxon>
        <taxon>Aspergillus subgen. Circumdati</taxon>
    </lineage>
</organism>
<evidence type="ECO:0000250" key="1"/>
<evidence type="ECO:0000255" key="2"/>
<evidence type="ECO:0000305" key="3"/>
<dbReference type="EC" id="3.2.1.22"/>
<dbReference type="EMBL" id="BA000051">
    <property type="protein sequence ID" value="BAE58728.1"/>
    <property type="status" value="ALT_SEQ"/>
    <property type="molecule type" value="Genomic_DNA"/>
</dbReference>
<dbReference type="RefSeq" id="XP_001820730.2">
    <property type="nucleotide sequence ID" value="XM_001820678.2"/>
</dbReference>
<dbReference type="SMR" id="Q2UI87"/>
<dbReference type="STRING" id="510516.Q2UI87"/>
<dbReference type="CAZy" id="GH27">
    <property type="family name" value="Glycoside Hydrolase Family 27"/>
</dbReference>
<dbReference type="GlyCosmos" id="Q2UI87">
    <property type="glycosylation" value="11 sites, No reported glycans"/>
</dbReference>
<dbReference type="GeneID" id="5992732"/>
<dbReference type="KEGG" id="aor:AO090023000151"/>
<dbReference type="VEuPathDB" id="FungiDB:AO090023000151"/>
<dbReference type="Proteomes" id="UP000006564">
    <property type="component" value="Chromosome 3"/>
</dbReference>
<dbReference type="GO" id="GO:0005576">
    <property type="term" value="C:extracellular region"/>
    <property type="evidence" value="ECO:0007669"/>
    <property type="project" value="UniProtKB-SubCell"/>
</dbReference>
<dbReference type="GO" id="GO:0004557">
    <property type="term" value="F:alpha-galactosidase activity"/>
    <property type="evidence" value="ECO:0007669"/>
    <property type="project" value="UniProtKB-EC"/>
</dbReference>
<dbReference type="GO" id="GO:0000272">
    <property type="term" value="P:polysaccharide catabolic process"/>
    <property type="evidence" value="ECO:0007669"/>
    <property type="project" value="UniProtKB-KW"/>
</dbReference>
<dbReference type="CDD" id="cd04081">
    <property type="entry name" value="CBM35_galactosidase-like"/>
    <property type="match status" value="1"/>
</dbReference>
<dbReference type="CDD" id="cd14792">
    <property type="entry name" value="GH27"/>
    <property type="match status" value="1"/>
</dbReference>
<dbReference type="FunFam" id="2.60.40.1180:FF:000008">
    <property type="entry name" value="Alpha-galactosidase"/>
    <property type="match status" value="1"/>
</dbReference>
<dbReference type="FunFam" id="3.20.20.70:FF:000197">
    <property type="entry name" value="Alpha-galactosidase"/>
    <property type="match status" value="1"/>
</dbReference>
<dbReference type="Gene3D" id="3.20.20.70">
    <property type="entry name" value="Aldolase class I"/>
    <property type="match status" value="1"/>
</dbReference>
<dbReference type="Gene3D" id="2.60.120.260">
    <property type="entry name" value="Galactose-binding domain-like"/>
    <property type="match status" value="1"/>
</dbReference>
<dbReference type="Gene3D" id="2.60.40.1180">
    <property type="entry name" value="Golgi alpha-mannosidase II"/>
    <property type="match status" value="1"/>
</dbReference>
<dbReference type="InterPro" id="IPR013785">
    <property type="entry name" value="Aldolase_TIM"/>
</dbReference>
<dbReference type="InterPro" id="IPR002241">
    <property type="entry name" value="Glyco_hydro_27"/>
</dbReference>
<dbReference type="InterPro" id="IPR013780">
    <property type="entry name" value="Glyco_hydro_b"/>
</dbReference>
<dbReference type="InterPro" id="IPR017853">
    <property type="entry name" value="Glycoside_hydrolase_SF"/>
</dbReference>
<dbReference type="InterPro" id="IPR041233">
    <property type="entry name" value="Melibiase_C"/>
</dbReference>
<dbReference type="PANTHER" id="PTHR11452:SF75">
    <property type="entry name" value="ALPHA-GALACTOSIDASE MEL1"/>
    <property type="match status" value="1"/>
</dbReference>
<dbReference type="PANTHER" id="PTHR11452">
    <property type="entry name" value="ALPHA-GALACTOSIDASE/ALPHA-N-ACETYLGALACTOSAMINIDASE"/>
    <property type="match status" value="1"/>
</dbReference>
<dbReference type="Pfam" id="PF16499">
    <property type="entry name" value="Melibiase_2"/>
    <property type="match status" value="1"/>
</dbReference>
<dbReference type="Pfam" id="PF17801">
    <property type="entry name" value="Melibiase_C"/>
    <property type="match status" value="1"/>
</dbReference>
<dbReference type="PRINTS" id="PR00740">
    <property type="entry name" value="GLHYDRLASE27"/>
</dbReference>
<dbReference type="SUPFAM" id="SSF51445">
    <property type="entry name" value="(Trans)glycosidases"/>
    <property type="match status" value="1"/>
</dbReference>
<dbReference type="SUPFAM" id="SSF51011">
    <property type="entry name" value="Glycosyl hydrolase domain"/>
    <property type="match status" value="1"/>
</dbReference>
<name>AGALD_ASPOR</name>